<keyword id="KW-0053">Apoptosis</keyword>
<keyword id="KW-0131">Cell cycle</keyword>
<keyword id="KW-0963">Cytoplasm</keyword>
<keyword id="KW-0206">Cytoskeleton</keyword>
<keyword id="KW-0493">Microtubule</keyword>
<keyword id="KW-0597">Phosphoprotein</keyword>
<keyword id="KW-1185">Reference proteome</keyword>
<sequence length="625" mass="70085">MSTPAIPQDLQLNPSQRTQSAFREQRRQKLKEHLLKRKTSFACKQENQMLLSDGDQRVRTSEGQIQEGKKVLKIKTEMADKENVGRPTGIKNNLTVEKNCIPLKPSNELTNSTLATDPPNSEDNNQTLPLLPVKDDPQSQHRTLSQTFHLKNNSKKKPVITEKPKHDANVPKKPVLGAYRGQIVQSKINSFRKPLQVKDESSATTKKLPATVSKATKPQPGDVSSITVKSDRASHMTSTTKFASTTSQIRHLVRPPIRSQHNKAQDAMKPGNSRMSANVTVQKGPREKELNTVLSGIKTSSSQDIKGDKTLSKSMAAGMVVRPASSSNTKLIEKSKSAGQRSHTTVKAAVDSRWTQPKETAEERKARLSEWKAGKGRILKRPPSSAVTRPEPETQNEQPVGSFWTTMAEEDEQRLFTEKVNKTFSECLNLINEPIEEMRHTIVDILTRKSQEKLKFGENIEETSAAEEKIQEAHTDDTGVDLESGKLEMENNPPRNVFQDCEKEQDDKVKDPTSDVKTPSTNTRAGCLIKYNVSTTPYLQSVKKKMQFDETNSAYKELKFLTPVRRSRRLQEKTSKLPDMLKDHYPCVSSLEQLTELGCETDAFVCRPNTALCGMFSEPDPTEEE</sequence>
<feature type="chain" id="PRO_0000324337" description="Cytoskeleton-associated protein 2">
    <location>
        <begin position="1"/>
        <end position="625"/>
    </location>
</feature>
<feature type="region of interest" description="Disordered" evidence="3">
    <location>
        <begin position="1"/>
        <end position="27"/>
    </location>
</feature>
<feature type="region of interest" description="Disordered" evidence="3">
    <location>
        <begin position="104"/>
        <end position="138"/>
    </location>
</feature>
<feature type="region of interest" description="Disordered" evidence="3">
    <location>
        <begin position="153"/>
        <end position="173"/>
    </location>
</feature>
<feature type="region of interest" description="Disordered" evidence="3">
    <location>
        <begin position="195"/>
        <end position="237"/>
    </location>
</feature>
<feature type="region of interest" description="Disordered" evidence="3">
    <location>
        <begin position="259"/>
        <end position="282"/>
    </location>
</feature>
<feature type="region of interest" description="Disordered" evidence="3">
    <location>
        <begin position="322"/>
        <end position="398"/>
    </location>
</feature>
<feature type="region of interest" description="Disordered" evidence="3">
    <location>
        <begin position="484"/>
        <end position="521"/>
    </location>
</feature>
<feature type="compositionally biased region" description="Polar residues" evidence="3">
    <location>
        <begin position="1"/>
        <end position="22"/>
    </location>
</feature>
<feature type="compositionally biased region" description="Polar residues" evidence="3">
    <location>
        <begin position="107"/>
        <end position="128"/>
    </location>
</feature>
<feature type="compositionally biased region" description="Basic and acidic residues" evidence="3">
    <location>
        <begin position="159"/>
        <end position="170"/>
    </location>
</feature>
<feature type="compositionally biased region" description="Basic and acidic residues" evidence="3">
    <location>
        <begin position="359"/>
        <end position="373"/>
    </location>
</feature>
<feature type="compositionally biased region" description="Basic and acidic residues" evidence="3">
    <location>
        <begin position="500"/>
        <end position="514"/>
    </location>
</feature>
<feature type="modified residue" description="Phosphoserine" evidence="2">
    <location>
        <position position="190"/>
    </location>
</feature>
<feature type="modified residue" description="Phosphothreonine" evidence="2">
    <location>
        <position position="518"/>
    </location>
</feature>
<feature type="modified residue" description="Phosphothreonine" evidence="2">
    <location>
        <position position="521"/>
    </location>
</feature>
<feature type="modified residue" description="Phosphoserine" evidence="2">
    <location>
        <position position="534"/>
    </location>
</feature>
<feature type="modified residue" description="Phosphothreonine" evidence="2">
    <location>
        <position position="535"/>
    </location>
</feature>
<feature type="modified residue" description="Phosphothreonine" evidence="2">
    <location>
        <position position="536"/>
    </location>
</feature>
<feature type="modified residue" description="Phosphotyrosine" evidence="2">
    <location>
        <position position="538"/>
    </location>
</feature>
<feature type="modified residue" description="Phosphoserine" evidence="2">
    <location>
        <position position="541"/>
    </location>
</feature>
<proteinExistence type="evidence at transcript level"/>
<gene>
    <name type="primary">CKAP2</name>
</gene>
<accession>A5D7U0</accession>
<evidence type="ECO:0000250" key="1"/>
<evidence type="ECO:0000250" key="2">
    <source>
        <dbReference type="UniProtKB" id="Q8WWK9"/>
    </source>
</evidence>
<evidence type="ECO:0000256" key="3">
    <source>
        <dbReference type="SAM" id="MobiDB-lite"/>
    </source>
</evidence>
<evidence type="ECO:0000305" key="4"/>
<protein>
    <recommendedName>
        <fullName>Cytoskeleton-associated protein 2</fullName>
    </recommendedName>
</protein>
<reference key="1">
    <citation type="submission" date="2007-04" db="EMBL/GenBank/DDBJ databases">
        <authorList>
            <consortium name="NIH - Mammalian Gene Collection (MGC) project"/>
        </authorList>
    </citation>
    <scope>NUCLEOTIDE SEQUENCE [LARGE SCALE MRNA]</scope>
    <source>
        <strain>Hereford</strain>
        <tissue>Fetal lung</tissue>
    </source>
</reference>
<name>CKAP2_BOVIN</name>
<dbReference type="EMBL" id="BC140680">
    <property type="protein sequence ID" value="AAI40681.1"/>
    <property type="molecule type" value="mRNA"/>
</dbReference>
<dbReference type="RefSeq" id="NP_001091501.1">
    <property type="nucleotide sequence ID" value="NM_001098032.2"/>
</dbReference>
<dbReference type="SMR" id="A5D7U0"/>
<dbReference type="FunCoup" id="A5D7U0">
    <property type="interactions" value="664"/>
</dbReference>
<dbReference type="STRING" id="9913.ENSBTAP00000065628"/>
<dbReference type="PaxDb" id="9913-ENSBTAP00000051947"/>
<dbReference type="GeneID" id="515249"/>
<dbReference type="KEGG" id="bta:515249"/>
<dbReference type="CTD" id="26586"/>
<dbReference type="eggNOG" id="ENOG502RUSI">
    <property type="taxonomic scope" value="Eukaryota"/>
</dbReference>
<dbReference type="InParanoid" id="A5D7U0"/>
<dbReference type="OrthoDB" id="9945093at2759"/>
<dbReference type="Proteomes" id="UP000009136">
    <property type="component" value="Unplaced"/>
</dbReference>
<dbReference type="GO" id="GO:0005737">
    <property type="term" value="C:cytoplasm"/>
    <property type="evidence" value="ECO:0007669"/>
    <property type="project" value="UniProtKB-KW"/>
</dbReference>
<dbReference type="GO" id="GO:0005874">
    <property type="term" value="C:microtubule"/>
    <property type="evidence" value="ECO:0007669"/>
    <property type="project" value="UniProtKB-KW"/>
</dbReference>
<dbReference type="GO" id="GO:0015630">
    <property type="term" value="C:microtubule cytoskeleton"/>
    <property type="evidence" value="ECO:0000318"/>
    <property type="project" value="GO_Central"/>
</dbReference>
<dbReference type="GO" id="GO:0006915">
    <property type="term" value="P:apoptotic process"/>
    <property type="evidence" value="ECO:0007669"/>
    <property type="project" value="UniProtKB-KW"/>
</dbReference>
<dbReference type="GO" id="GO:0007026">
    <property type="term" value="P:negative regulation of microtubule depolymerization"/>
    <property type="evidence" value="ECO:0000318"/>
    <property type="project" value="GO_Central"/>
</dbReference>
<dbReference type="InterPro" id="IPR029197">
    <property type="entry name" value="CKAP2_C"/>
</dbReference>
<dbReference type="InterPro" id="IPR026165">
    <property type="entry name" value="CKAP2_fam"/>
</dbReference>
<dbReference type="PANTHER" id="PTHR16076">
    <property type="entry name" value="CYTOSKELETON ASSOCIATED PROTEIN 2-RELATED"/>
    <property type="match status" value="1"/>
</dbReference>
<dbReference type="PANTHER" id="PTHR16076:SF8">
    <property type="entry name" value="CYTOSKELETON-ASSOCIATED PROTEIN 2"/>
    <property type="match status" value="1"/>
</dbReference>
<dbReference type="Pfam" id="PF15297">
    <property type="entry name" value="CKAP2_C"/>
    <property type="match status" value="2"/>
</dbReference>
<comment type="function">
    <text evidence="1">Possesses microtubule stabilizing properties. Involved in regulating aneuploidy, cell cycling, and cell death in a p53/TP53-dependent manner (By similarity).</text>
</comment>
<comment type="subunit">
    <text evidence="1">Associates with alpha- and beta-tubulins.</text>
</comment>
<comment type="subcellular location">
    <subcellularLocation>
        <location evidence="1">Cytoplasm</location>
        <location evidence="1">Cytoskeleton</location>
    </subcellularLocation>
</comment>
<comment type="similarity">
    <text evidence="4">Belongs to the CKAP2 family.</text>
</comment>
<organism>
    <name type="scientific">Bos taurus</name>
    <name type="common">Bovine</name>
    <dbReference type="NCBI Taxonomy" id="9913"/>
    <lineage>
        <taxon>Eukaryota</taxon>
        <taxon>Metazoa</taxon>
        <taxon>Chordata</taxon>
        <taxon>Craniata</taxon>
        <taxon>Vertebrata</taxon>
        <taxon>Euteleostomi</taxon>
        <taxon>Mammalia</taxon>
        <taxon>Eutheria</taxon>
        <taxon>Laurasiatheria</taxon>
        <taxon>Artiodactyla</taxon>
        <taxon>Ruminantia</taxon>
        <taxon>Pecora</taxon>
        <taxon>Bovidae</taxon>
        <taxon>Bovinae</taxon>
        <taxon>Bos</taxon>
    </lineage>
</organism>